<organism>
    <name type="scientific">Archaeoglobus fulgidus (strain ATCC 49558 / DSM 4304 / JCM 9628 / NBRC 100126 / VC-16)</name>
    <dbReference type="NCBI Taxonomy" id="224325"/>
    <lineage>
        <taxon>Archaea</taxon>
        <taxon>Methanobacteriati</taxon>
        <taxon>Methanobacteriota</taxon>
        <taxon>Archaeoglobi</taxon>
        <taxon>Archaeoglobales</taxon>
        <taxon>Archaeoglobaceae</taxon>
        <taxon>Archaeoglobus</taxon>
    </lineage>
</organism>
<keyword id="KW-0002">3D-structure</keyword>
<keyword id="KW-0067">ATP-binding</keyword>
<keyword id="KW-0963">Cytoplasm</keyword>
<keyword id="KW-1015">Disulfide bond</keyword>
<keyword id="KW-0238">DNA-binding</keyword>
<keyword id="KW-0413">Isomerase</keyword>
<keyword id="KW-0460">Magnesium</keyword>
<keyword id="KW-0479">Metal-binding</keyword>
<keyword id="KW-0547">Nucleotide-binding</keyword>
<keyword id="KW-1185">Reference proteome</keyword>
<keyword id="KW-0677">Repeat</keyword>
<keyword id="KW-0799">Topoisomerase</keyword>
<keyword id="KW-0862">Zinc</keyword>
<keyword id="KW-0863">Zinc-finger</keyword>
<gene>
    <name evidence="1" type="primary">rgy</name>
    <name type="ordered locus">AF_1024</name>
</gene>
<dbReference type="EC" id="5.6.2.-" evidence="1 9"/>
<dbReference type="EMBL" id="AE000782">
    <property type="protein sequence ID" value="AAB90219.1"/>
    <property type="molecule type" value="Genomic_DNA"/>
</dbReference>
<dbReference type="PIR" id="H69377">
    <property type="entry name" value="H69377"/>
</dbReference>
<dbReference type="RefSeq" id="WP_010878524.1">
    <property type="nucleotide sequence ID" value="NC_000917.1"/>
</dbReference>
<dbReference type="PDB" id="1GKU">
    <property type="method" value="X-ray"/>
    <property type="resolution" value="2.70 A"/>
    <property type="chains" value="B=33-1054"/>
</dbReference>
<dbReference type="PDB" id="1GL9">
    <property type="method" value="X-ray"/>
    <property type="resolution" value="3.20 A"/>
    <property type="chains" value="B/C=1-1054"/>
</dbReference>
<dbReference type="PDBsum" id="1GKU"/>
<dbReference type="PDBsum" id="1GL9"/>
<dbReference type="SMR" id="O29238"/>
<dbReference type="STRING" id="224325.AF_1024"/>
<dbReference type="PaxDb" id="224325-AF_1024"/>
<dbReference type="EnsemblBacteria" id="AAB90219">
    <property type="protein sequence ID" value="AAB90219"/>
    <property type="gene ID" value="AF_1024"/>
</dbReference>
<dbReference type="GeneID" id="1484247"/>
<dbReference type="KEGG" id="afu:AF_1024"/>
<dbReference type="eggNOG" id="arCOG01526">
    <property type="taxonomic scope" value="Archaea"/>
</dbReference>
<dbReference type="HOGENOM" id="CLU_002886_0_0_2"/>
<dbReference type="OrthoDB" id="30963at2157"/>
<dbReference type="PhylomeDB" id="O29238"/>
<dbReference type="BRENDA" id="5.6.2.2">
    <property type="organism ID" value="414"/>
</dbReference>
<dbReference type="EvolutionaryTrace" id="O29238"/>
<dbReference type="Proteomes" id="UP000002199">
    <property type="component" value="Chromosome"/>
</dbReference>
<dbReference type="GO" id="GO:0005737">
    <property type="term" value="C:cytoplasm"/>
    <property type="evidence" value="ECO:0007669"/>
    <property type="project" value="UniProtKB-SubCell"/>
</dbReference>
<dbReference type="GO" id="GO:0005524">
    <property type="term" value="F:ATP binding"/>
    <property type="evidence" value="ECO:0007669"/>
    <property type="project" value="UniProtKB-UniRule"/>
</dbReference>
<dbReference type="GO" id="GO:0016887">
    <property type="term" value="F:ATP hydrolysis activity"/>
    <property type="evidence" value="ECO:0007669"/>
    <property type="project" value="RHEA"/>
</dbReference>
<dbReference type="GO" id="GO:0003677">
    <property type="term" value="F:DNA binding"/>
    <property type="evidence" value="ECO:0007669"/>
    <property type="project" value="UniProtKB-UniRule"/>
</dbReference>
<dbReference type="GO" id="GO:0003918">
    <property type="term" value="F:DNA topoisomerase type II (double strand cut, ATP-hydrolyzing) activity"/>
    <property type="evidence" value="ECO:0007669"/>
    <property type="project" value="UniProtKB-EC"/>
</dbReference>
<dbReference type="GO" id="GO:0160097">
    <property type="term" value="F:reverse gyrase activity"/>
    <property type="evidence" value="ECO:0000314"/>
    <property type="project" value="UniProtKB"/>
</dbReference>
<dbReference type="GO" id="GO:0008270">
    <property type="term" value="F:zinc ion binding"/>
    <property type="evidence" value="ECO:0007669"/>
    <property type="project" value="UniProtKB-UniRule"/>
</dbReference>
<dbReference type="GO" id="GO:0006265">
    <property type="term" value="P:DNA topological change"/>
    <property type="evidence" value="ECO:0000314"/>
    <property type="project" value="UniProtKB"/>
</dbReference>
<dbReference type="CDD" id="cd17924">
    <property type="entry name" value="DDXDc_reverse_gyrase"/>
    <property type="match status" value="1"/>
</dbReference>
<dbReference type="CDD" id="cd18798">
    <property type="entry name" value="SF2_C_reverse_gyrase"/>
    <property type="match status" value="1"/>
</dbReference>
<dbReference type="CDD" id="cd00186">
    <property type="entry name" value="TOP1Ac"/>
    <property type="match status" value="1"/>
</dbReference>
<dbReference type="CDD" id="cd03361">
    <property type="entry name" value="TOPRIM_TopoIA_RevGyr"/>
    <property type="match status" value="1"/>
</dbReference>
<dbReference type="Gene3D" id="2.60.510.20">
    <property type="match status" value="1"/>
</dbReference>
<dbReference type="Gene3D" id="3.30.56.120">
    <property type="match status" value="1"/>
</dbReference>
<dbReference type="Gene3D" id="3.40.50.140">
    <property type="match status" value="1"/>
</dbReference>
<dbReference type="Gene3D" id="3.40.50.300">
    <property type="entry name" value="P-loop containing nucleotide triphosphate hydrolases"/>
    <property type="match status" value="2"/>
</dbReference>
<dbReference type="Gene3D" id="2.20.20.30">
    <property type="entry name" value="reverse gyrase domain"/>
    <property type="match status" value="1"/>
</dbReference>
<dbReference type="Gene3D" id="1.10.460.10">
    <property type="entry name" value="Topoisomerase I, domain 2"/>
    <property type="match status" value="1"/>
</dbReference>
<dbReference type="Gene3D" id="1.10.290.10">
    <property type="entry name" value="Topoisomerase I, domain 4"/>
    <property type="match status" value="1"/>
</dbReference>
<dbReference type="HAMAP" id="MF_01125">
    <property type="entry name" value="Reverse_gyrase"/>
    <property type="match status" value="1"/>
</dbReference>
<dbReference type="InterPro" id="IPR011545">
    <property type="entry name" value="DEAD/DEAH_box_helicase_dom"/>
</dbReference>
<dbReference type="InterPro" id="IPR014001">
    <property type="entry name" value="Helicase_ATP-bd"/>
</dbReference>
<dbReference type="InterPro" id="IPR027417">
    <property type="entry name" value="P-loop_NTPase"/>
</dbReference>
<dbReference type="InterPro" id="IPR005736">
    <property type="entry name" value="Reverse_gyrase"/>
</dbReference>
<dbReference type="InterPro" id="IPR003601">
    <property type="entry name" value="Topo_IA_2"/>
</dbReference>
<dbReference type="InterPro" id="IPR013497">
    <property type="entry name" value="Topo_IA_cen"/>
</dbReference>
<dbReference type="InterPro" id="IPR013824">
    <property type="entry name" value="Topo_IA_cen_sub1"/>
</dbReference>
<dbReference type="InterPro" id="IPR013826">
    <property type="entry name" value="Topo_IA_cen_sub3"/>
</dbReference>
<dbReference type="InterPro" id="IPR023405">
    <property type="entry name" value="Topo_IA_core_domain"/>
</dbReference>
<dbReference type="InterPro" id="IPR003602">
    <property type="entry name" value="Topo_IA_DNA-bd_dom"/>
</dbReference>
<dbReference type="InterPro" id="IPR006171">
    <property type="entry name" value="TOPRIM_dom"/>
</dbReference>
<dbReference type="InterPro" id="IPR034142">
    <property type="entry name" value="TOPRIM_RevGyr"/>
</dbReference>
<dbReference type="InterPro" id="IPR040569">
    <property type="entry name" value="Znf_Rg"/>
</dbReference>
<dbReference type="NCBIfam" id="TIGR01054">
    <property type="entry name" value="rgy"/>
    <property type="match status" value="1"/>
</dbReference>
<dbReference type="PANTHER" id="PTHR43505">
    <property type="entry name" value="REVERSE GYRASE"/>
    <property type="match status" value="1"/>
</dbReference>
<dbReference type="PANTHER" id="PTHR43505:SF1">
    <property type="entry name" value="REVERSE GYRASE"/>
    <property type="match status" value="1"/>
</dbReference>
<dbReference type="Pfam" id="PF00270">
    <property type="entry name" value="DEAD"/>
    <property type="match status" value="1"/>
</dbReference>
<dbReference type="Pfam" id="PF01131">
    <property type="entry name" value="Topoisom_bac"/>
    <property type="match status" value="2"/>
</dbReference>
<dbReference type="Pfam" id="PF01751">
    <property type="entry name" value="Toprim"/>
    <property type="match status" value="1"/>
</dbReference>
<dbReference type="PRINTS" id="PR00417">
    <property type="entry name" value="PRTPISMRASEI"/>
</dbReference>
<dbReference type="SMART" id="SM00487">
    <property type="entry name" value="DEXDc"/>
    <property type="match status" value="1"/>
</dbReference>
<dbReference type="SMART" id="SM00437">
    <property type="entry name" value="TOP1Ac"/>
    <property type="match status" value="1"/>
</dbReference>
<dbReference type="SMART" id="SM00436">
    <property type="entry name" value="TOP1Bc"/>
    <property type="match status" value="1"/>
</dbReference>
<dbReference type="SMART" id="SM00493">
    <property type="entry name" value="TOPRIM"/>
    <property type="match status" value="1"/>
</dbReference>
<dbReference type="SUPFAM" id="SSF52540">
    <property type="entry name" value="P-loop containing nucleoside triphosphate hydrolases"/>
    <property type="match status" value="2"/>
</dbReference>
<dbReference type="SUPFAM" id="SSF56712">
    <property type="entry name" value="Prokaryotic type I DNA topoisomerase"/>
    <property type="match status" value="1"/>
</dbReference>
<dbReference type="PROSITE" id="PS51192">
    <property type="entry name" value="HELICASE_ATP_BIND_1"/>
    <property type="match status" value="1"/>
</dbReference>
<dbReference type="PROSITE" id="PS52039">
    <property type="entry name" value="TOPO_IA_2"/>
    <property type="match status" value="1"/>
</dbReference>
<dbReference type="PROSITE" id="PS50880">
    <property type="entry name" value="TOPRIM"/>
    <property type="match status" value="1"/>
</dbReference>
<dbReference type="PROSITE" id="PS52037">
    <property type="entry name" value="ZF_RG_C"/>
    <property type="match status" value="1"/>
</dbReference>
<dbReference type="PROSITE" id="PS52036">
    <property type="entry name" value="ZF_RG_N"/>
    <property type="match status" value="1"/>
</dbReference>
<proteinExistence type="evidence at protein level"/>
<name>RGYR_ARCFU</name>
<feature type="chain" id="PRO_0000158086" description="Reverse gyrase">
    <location>
        <begin position="1"/>
        <end position="1054"/>
    </location>
</feature>
<feature type="domain" description="Helicase ATP-binding" evidence="1">
    <location>
        <begin position="65"/>
        <end position="245"/>
    </location>
</feature>
<feature type="domain" description="Toprim" evidence="1">
    <location>
        <begin position="506"/>
        <end position="662"/>
    </location>
</feature>
<feature type="domain" description="Topo IA-type catalytic" evidence="4">
    <location>
        <begin position="677"/>
        <end position="1054"/>
    </location>
</feature>
<feature type="zinc finger region" description="RG N-terminal-type" evidence="2">
    <location>
        <begin position="1"/>
        <end position="43"/>
    </location>
</feature>
<feature type="zinc finger region" description="RG C-terminal-type" evidence="3">
    <location>
        <begin position="581"/>
        <end position="609"/>
    </location>
</feature>
<feature type="region of interest" description="Latch region" evidence="12 13">
    <location>
        <begin position="352"/>
        <end position="427"/>
    </location>
</feature>
<feature type="region of interest" description="Topoisomerase I" evidence="1">
    <location>
        <begin position="502"/>
        <end position="1054"/>
    </location>
</feature>
<feature type="short sequence motif" description="DEAD box" evidence="1">
    <location>
        <begin position="182"/>
        <end position="185"/>
    </location>
</feature>
<feature type="active site" description="O-(5'-phospho-DNA)-tyrosine intermediate" evidence="4">
    <location>
        <position position="809"/>
    </location>
</feature>
<feature type="binding site" evidence="2">
    <location>
        <position position="10"/>
    </location>
    <ligand>
        <name>Zn(2+)</name>
        <dbReference type="ChEBI" id="CHEBI:29105"/>
        <label>1</label>
    </ligand>
</feature>
<feature type="binding site" evidence="2">
    <location>
        <position position="13"/>
    </location>
    <ligand>
        <name>Zn(2+)</name>
        <dbReference type="ChEBI" id="CHEBI:29105"/>
        <label>1</label>
    </ligand>
</feature>
<feature type="binding site" evidence="2">
    <location>
        <position position="27"/>
    </location>
    <ligand>
        <name>Zn(2+)</name>
        <dbReference type="ChEBI" id="CHEBI:29105"/>
        <label>1</label>
    </ligand>
</feature>
<feature type="binding site" evidence="2">
    <location>
        <position position="35"/>
    </location>
    <ligand>
        <name>Zn(2+)</name>
        <dbReference type="ChEBI" id="CHEBI:29105"/>
        <label>1</label>
    </ligand>
</feature>
<feature type="binding site" evidence="1 11">
    <location>
        <position position="61"/>
    </location>
    <ligand>
        <name>ATP</name>
        <dbReference type="ChEBI" id="CHEBI:30616"/>
    </ligand>
</feature>
<feature type="binding site" evidence="11">
    <location>
        <position position="84"/>
    </location>
    <ligand>
        <name>ATP</name>
        <dbReference type="ChEBI" id="CHEBI:30616"/>
    </ligand>
</feature>
<feature type="binding site" evidence="11">
    <location>
        <position position="85"/>
    </location>
    <ligand>
        <name>ATP</name>
        <dbReference type="ChEBI" id="CHEBI:30616"/>
    </ligand>
</feature>
<feature type="binding site" evidence="11">
    <location>
        <position position="86"/>
    </location>
    <ligand>
        <name>ATP</name>
        <dbReference type="ChEBI" id="CHEBI:30616"/>
    </ligand>
</feature>
<feature type="binding site" evidence="1">
    <location>
        <position position="512"/>
    </location>
    <ligand>
        <name>Mg(2+)</name>
        <dbReference type="ChEBI" id="CHEBI:18420"/>
        <note>catalytic</note>
    </ligand>
</feature>
<feature type="binding site" evidence="1">
    <location>
        <position position="584"/>
    </location>
    <ligand>
        <name>Zn(2+)</name>
        <dbReference type="ChEBI" id="CHEBI:29105"/>
        <label>2</label>
    </ligand>
</feature>
<feature type="binding site" evidence="1">
    <location>
        <position position="587"/>
    </location>
    <ligand>
        <name>Zn(2+)</name>
        <dbReference type="ChEBI" id="CHEBI:29105"/>
        <label>2</label>
    </ligand>
</feature>
<feature type="binding site" evidence="1">
    <location>
        <position position="598"/>
    </location>
    <ligand>
        <name>Zn(2+)</name>
        <dbReference type="ChEBI" id="CHEBI:29105"/>
        <label>2</label>
    </ligand>
</feature>
<feature type="binding site" evidence="1">
    <location>
        <position position="601"/>
    </location>
    <ligand>
        <name>Zn(2+)</name>
        <dbReference type="ChEBI" id="CHEBI:29105"/>
        <label>2</label>
    </ligand>
</feature>
<feature type="binding site" evidence="1">
    <location>
        <position position="631"/>
    </location>
    <ligand>
        <name>Mg(2+)</name>
        <dbReference type="ChEBI" id="CHEBI:18420"/>
        <note>catalytic</note>
    </ligand>
</feature>
<feature type="disulfide bond" evidence="12 15 16">
    <location>
        <begin position="35"/>
        <end position="650"/>
    </location>
</feature>
<feature type="mutagenesis site" description="Reduces positive supercoiling, relaxes DNA in the absence of nucleotide, alters DNA-dependent ATPase activity." evidence="6 7">
    <location>
        <begin position="360"/>
        <end position="418"/>
    </location>
</feature>
<feature type="mutagenesis site" description="Weak positive supercoiling activity in the absence of nucleotide, supercoils normally in the presence of ATP, binds DNA normally. Higher ATPase activity." evidence="6 7">
    <location>
        <begin position="370"/>
        <end position="381"/>
    </location>
</feature>
<feature type="mutagenesis site" description="Loss of topoisomerase activity." evidence="6">
    <original>Y</original>
    <variation>F</variation>
    <location>
        <position position="809"/>
    </location>
</feature>
<feature type="strand" evidence="20">
    <location>
        <begin position="19"/>
        <end position="21"/>
    </location>
</feature>
<feature type="helix" evidence="19">
    <location>
        <begin position="40"/>
        <end position="51"/>
    </location>
</feature>
<feature type="turn" evidence="19">
    <location>
        <begin position="52"/>
        <end position="54"/>
    </location>
</feature>
<feature type="helix" evidence="19">
    <location>
        <begin position="59"/>
        <end position="69"/>
    </location>
</feature>
<feature type="strand" evidence="20">
    <location>
        <begin position="74"/>
        <end position="76"/>
    </location>
</feature>
<feature type="helix" evidence="19">
    <location>
        <begin position="85"/>
        <end position="96"/>
    </location>
</feature>
<feature type="turn" evidence="20">
    <location>
        <begin position="97"/>
        <end position="99"/>
    </location>
</feature>
<feature type="strand" evidence="19">
    <location>
        <begin position="102"/>
        <end position="107"/>
    </location>
</feature>
<feature type="helix" evidence="19">
    <location>
        <begin position="109"/>
        <end position="123"/>
    </location>
</feature>
<feature type="turn" evidence="19">
    <location>
        <begin position="124"/>
        <end position="126"/>
    </location>
</feature>
<feature type="helix" evidence="19">
    <location>
        <begin position="130"/>
        <end position="132"/>
    </location>
</feature>
<feature type="strand" evidence="19">
    <location>
        <begin position="133"/>
        <end position="136"/>
    </location>
</feature>
<feature type="helix" evidence="19">
    <location>
        <begin position="144"/>
        <end position="151"/>
    </location>
</feature>
<feature type="helix" evidence="19">
    <location>
        <begin position="153"/>
        <end position="155"/>
    </location>
</feature>
<feature type="strand" evidence="19">
    <location>
        <begin position="157"/>
        <end position="162"/>
    </location>
</feature>
<feature type="helix" evidence="19">
    <location>
        <begin position="163"/>
        <end position="168"/>
    </location>
</feature>
<feature type="strand" evidence="20">
    <location>
        <begin position="170"/>
        <end position="173"/>
    </location>
</feature>
<feature type="strand" evidence="19">
    <location>
        <begin position="177"/>
        <end position="182"/>
    </location>
</feature>
<feature type="helix" evidence="19">
    <location>
        <begin position="184"/>
        <end position="188"/>
    </location>
</feature>
<feature type="helix" evidence="19">
    <location>
        <begin position="192"/>
        <end position="200"/>
    </location>
</feature>
<feature type="strand" evidence="19">
    <location>
        <begin position="203"/>
        <end position="206"/>
    </location>
</feature>
<feature type="turn" evidence="19">
    <location>
        <begin position="207"/>
        <end position="210"/>
    </location>
</feature>
<feature type="strand" evidence="19">
    <location>
        <begin position="211"/>
        <end position="214"/>
    </location>
</feature>
<feature type="strand" evidence="19">
    <location>
        <begin position="217"/>
        <end position="222"/>
    </location>
</feature>
<feature type="strand" evidence="20">
    <location>
        <begin position="225"/>
        <end position="227"/>
    </location>
</feature>
<feature type="helix" evidence="19">
    <location>
        <begin position="233"/>
        <end position="240"/>
    </location>
</feature>
<feature type="strand" evidence="19">
    <location>
        <begin position="254"/>
        <end position="260"/>
    </location>
</feature>
<feature type="turn" evidence="19">
    <location>
        <begin position="264"/>
        <end position="267"/>
    </location>
</feature>
<feature type="helix" evidence="19">
    <location>
        <begin position="268"/>
        <end position="271"/>
    </location>
</feature>
<feature type="strand" evidence="19">
    <location>
        <begin position="278"/>
        <end position="284"/>
    </location>
</feature>
<feature type="helix" evidence="19">
    <location>
        <begin position="285"/>
        <end position="293"/>
    </location>
</feature>
<feature type="turn" evidence="19">
    <location>
        <begin position="294"/>
        <end position="297"/>
    </location>
</feature>
<feature type="strand" evidence="19">
    <location>
        <begin position="301"/>
        <end position="303"/>
    </location>
</feature>
<feature type="strand" evidence="19">
    <location>
        <begin position="307"/>
        <end position="309"/>
    </location>
</feature>
<feature type="helix" evidence="19">
    <location>
        <begin position="310"/>
        <end position="316"/>
    </location>
</feature>
<feature type="strand" evidence="19">
    <location>
        <begin position="321"/>
        <end position="326"/>
    </location>
</feature>
<feature type="helix" evidence="20">
    <location>
        <begin position="327"/>
        <end position="332"/>
    </location>
</feature>
<feature type="helix" evidence="20">
    <location>
        <begin position="334"/>
        <end position="336"/>
    </location>
</feature>
<feature type="turn" evidence="19">
    <location>
        <begin position="340"/>
        <end position="342"/>
    </location>
</feature>
<feature type="strand" evidence="19">
    <location>
        <begin position="345"/>
        <end position="350"/>
    </location>
</feature>
<feature type="strand" evidence="19">
    <location>
        <begin position="353"/>
        <end position="357"/>
    </location>
</feature>
<feature type="turn" evidence="20">
    <location>
        <begin position="358"/>
        <end position="360"/>
    </location>
</feature>
<feature type="helix" evidence="19">
    <location>
        <begin position="361"/>
        <end position="363"/>
    </location>
</feature>
<feature type="helix" evidence="19">
    <location>
        <begin position="366"/>
        <end position="373"/>
    </location>
</feature>
<feature type="turn" evidence="19">
    <location>
        <begin position="374"/>
        <end position="376"/>
    </location>
</feature>
<feature type="helix" evidence="19">
    <location>
        <begin position="379"/>
        <end position="383"/>
    </location>
</feature>
<feature type="turn" evidence="19">
    <location>
        <begin position="387"/>
        <end position="389"/>
    </location>
</feature>
<feature type="helix" evidence="19">
    <location>
        <begin position="393"/>
        <end position="404"/>
    </location>
</feature>
<feature type="strand" evidence="19">
    <location>
        <begin position="412"/>
        <end position="417"/>
    </location>
</feature>
<feature type="strand" evidence="19">
    <location>
        <begin position="420"/>
        <end position="424"/>
    </location>
</feature>
<feature type="helix" evidence="19">
    <location>
        <begin position="426"/>
        <end position="434"/>
    </location>
</feature>
<feature type="strand" evidence="19">
    <location>
        <begin position="447"/>
        <end position="452"/>
    </location>
</feature>
<feature type="helix" evidence="19">
    <location>
        <begin position="456"/>
        <end position="467"/>
    </location>
</feature>
<feature type="helix" evidence="19">
    <location>
        <begin position="481"/>
        <end position="496"/>
    </location>
</feature>
<feature type="helix" evidence="19">
    <location>
        <begin position="498"/>
        <end position="500"/>
    </location>
</feature>
<feature type="strand" evidence="19">
    <location>
        <begin position="505"/>
        <end position="512"/>
    </location>
</feature>
<feature type="helix" evidence="19">
    <location>
        <begin position="514"/>
        <end position="521"/>
    </location>
</feature>
<feature type="helix" evidence="19">
    <location>
        <begin position="522"/>
        <end position="524"/>
    </location>
</feature>
<feature type="strand" evidence="19">
    <location>
        <begin position="528"/>
        <end position="532"/>
    </location>
</feature>
<feature type="strand" evidence="19">
    <location>
        <begin position="535"/>
        <end position="541"/>
    </location>
</feature>
<feature type="strand" evidence="19">
    <location>
        <begin position="543"/>
        <end position="551"/>
    </location>
</feature>
<feature type="strand" evidence="19">
    <location>
        <begin position="556"/>
        <end position="559"/>
    </location>
</feature>
<feature type="strand" evidence="19">
    <location>
        <begin position="561"/>
        <end position="564"/>
    </location>
</feature>
<feature type="strand" evidence="19">
    <location>
        <begin position="571"/>
        <end position="573"/>
    </location>
</feature>
<feature type="strand" evidence="19">
    <location>
        <begin position="577"/>
        <end position="580"/>
    </location>
</feature>
<feature type="helix" evidence="19">
    <location>
        <begin position="609"/>
        <end position="623"/>
    </location>
</feature>
<feature type="strand" evidence="19">
    <location>
        <begin position="624"/>
        <end position="628"/>
    </location>
</feature>
<feature type="helix" evidence="19">
    <location>
        <begin position="634"/>
        <end position="647"/>
    </location>
</feature>
<feature type="strand" evidence="19">
    <location>
        <begin position="650"/>
        <end position="655"/>
    </location>
</feature>
<feature type="helix" evidence="19">
    <location>
        <begin position="663"/>
        <end position="670"/>
    </location>
</feature>
<feature type="helix" evidence="19">
    <location>
        <begin position="678"/>
        <end position="704"/>
    </location>
</feature>
<feature type="turn" evidence="19">
    <location>
        <begin position="705"/>
        <end position="707"/>
    </location>
</feature>
<feature type="helix" evidence="19">
    <location>
        <begin position="717"/>
        <end position="728"/>
    </location>
</feature>
<feature type="helix" evidence="19">
    <location>
        <begin position="730"/>
        <end position="732"/>
    </location>
</feature>
<feature type="strand" evidence="19">
    <location>
        <begin position="733"/>
        <end position="740"/>
    </location>
</feature>
<feature type="turn" evidence="19">
    <location>
        <begin position="741"/>
        <end position="744"/>
    </location>
</feature>
<feature type="strand" evidence="19">
    <location>
        <begin position="745"/>
        <end position="748"/>
    </location>
</feature>
<feature type="strand" evidence="19">
    <location>
        <begin position="752"/>
        <end position="768"/>
    </location>
</feature>
<feature type="helix" evidence="19">
    <location>
        <begin position="776"/>
        <end position="785"/>
    </location>
</feature>
<feature type="helix" evidence="19">
    <location>
        <begin position="791"/>
        <end position="803"/>
    </location>
</feature>
<feature type="strand" evidence="19">
    <location>
        <begin position="806"/>
        <end position="808"/>
    </location>
</feature>
<feature type="helix" evidence="19">
    <location>
        <begin position="819"/>
        <end position="829"/>
    </location>
</feature>
<feature type="strand" evidence="20">
    <location>
        <begin position="830"/>
        <end position="833"/>
    </location>
</feature>
<feature type="strand" evidence="19">
    <location>
        <begin position="849"/>
        <end position="852"/>
    </location>
</feature>
<feature type="helix" evidence="19">
    <location>
        <begin position="855"/>
        <end position="864"/>
    </location>
</feature>
<feature type="helix" evidence="19">
    <location>
        <begin position="874"/>
        <end position="889"/>
    </location>
</feature>
<feature type="strand" evidence="19">
    <location>
        <begin position="895"/>
        <end position="906"/>
    </location>
</feature>
<feature type="strand" evidence="19">
    <location>
        <begin position="909"/>
        <end position="913"/>
    </location>
</feature>
<feature type="strand" evidence="19">
    <location>
        <begin position="916"/>
        <end position="921"/>
    </location>
</feature>
<feature type="helix" evidence="19">
    <location>
        <begin position="922"/>
        <end position="926"/>
    </location>
</feature>
<feature type="strand" evidence="19">
    <location>
        <begin position="939"/>
        <end position="945"/>
    </location>
</feature>
<feature type="strand" evidence="19">
    <location>
        <begin position="948"/>
        <end position="953"/>
    </location>
</feature>
<feature type="helix" evidence="19">
    <location>
        <begin position="958"/>
        <end position="968"/>
    </location>
</feature>
<feature type="turn" evidence="19">
    <location>
        <begin position="973"/>
        <end position="975"/>
    </location>
</feature>
<feature type="helix" evidence="19">
    <location>
        <begin position="976"/>
        <end position="985"/>
    </location>
</feature>
<feature type="strand" evidence="19">
    <location>
        <begin position="988"/>
        <end position="992"/>
    </location>
</feature>
<feature type="strand" evidence="19">
    <location>
        <begin position="995"/>
        <end position="998"/>
    </location>
</feature>
<feature type="helix" evidence="19">
    <location>
        <begin position="1000"/>
        <end position="1011"/>
    </location>
</feature>
<feature type="helix" evidence="19">
    <location>
        <begin position="1015"/>
        <end position="1017"/>
    </location>
</feature>
<feature type="helix" evidence="19">
    <location>
        <begin position="1019"/>
        <end position="1034"/>
    </location>
</feature>
<feature type="helix" evidence="19">
    <location>
        <begin position="1039"/>
        <end position="1051"/>
    </location>
</feature>
<reference key="1">
    <citation type="journal article" date="1997" name="Nature">
        <title>The complete genome sequence of the hyperthermophilic, sulphate-reducing archaeon Archaeoglobus fulgidus.</title>
        <authorList>
            <person name="Klenk H.-P."/>
            <person name="Clayton R.A."/>
            <person name="Tomb J.-F."/>
            <person name="White O."/>
            <person name="Nelson K.E."/>
            <person name="Ketchum K.A."/>
            <person name="Dodson R.J."/>
            <person name="Gwinn M.L."/>
            <person name="Hickey E.K."/>
            <person name="Peterson J.D."/>
            <person name="Richardson D.L."/>
            <person name="Kerlavage A.R."/>
            <person name="Graham D.E."/>
            <person name="Kyrpides N.C."/>
            <person name="Fleischmann R.D."/>
            <person name="Quackenbush J."/>
            <person name="Lee N.H."/>
            <person name="Sutton G.G."/>
            <person name="Gill S.R."/>
            <person name="Kirkness E.F."/>
            <person name="Dougherty B.A."/>
            <person name="McKenney K."/>
            <person name="Adams M.D."/>
            <person name="Loftus B.J."/>
            <person name="Peterson S.N."/>
            <person name="Reich C.I."/>
            <person name="McNeil L.K."/>
            <person name="Badger J.H."/>
            <person name="Glodek A."/>
            <person name="Zhou L."/>
            <person name="Overbeek R."/>
            <person name="Gocayne J.D."/>
            <person name="Weidman J.F."/>
            <person name="McDonald L.A."/>
            <person name="Utterback T.R."/>
            <person name="Cotton M.D."/>
            <person name="Spriggs T."/>
            <person name="Artiach P."/>
            <person name="Kaine B.P."/>
            <person name="Sykes S.M."/>
            <person name="Sadow P.W."/>
            <person name="D'Andrea K.P."/>
            <person name="Bowman C."/>
            <person name="Fujii C."/>
            <person name="Garland S.A."/>
            <person name="Mason T.M."/>
            <person name="Olsen G.J."/>
            <person name="Fraser C.M."/>
            <person name="Smith H.O."/>
            <person name="Woese C.R."/>
            <person name="Venter J.C."/>
        </authorList>
    </citation>
    <scope>NUCLEOTIDE SEQUENCE [LARGE SCALE GENOMIC DNA]</scope>
    <source>
        <strain>ATCC 49558 / DSM 4304 / JCM 9628 / NBRC 100126 / VC-16</strain>
    </source>
</reference>
<reference key="2">
    <citation type="journal article" date="2002" name="J. Biol. Chem.">
        <title>Studies of a positive supercoiling machine. Nucleotide hydrolysis and a multifunctional 'latch' in the mechanism of reverse gyrase.</title>
        <authorList>
            <person name="Rodriguez A.C."/>
        </authorList>
    </citation>
    <scope>FUNCTION</scope>
    <scope>N-TERMINAL DOMAIN FUNCTIONAL CHARACTERIZATION</scope>
    <scope>BIOPHYSICOCHEMICAL PROPERTIES</scope>
    <scope>DOMAIN</scope>
    <scope>DNA-BINDING</scope>
    <scope>POSSIBLE DISULFIDE BOND</scope>
    <scope>ACTIVE SITE</scope>
    <scope>MUTAGENESIS OF 360-ASP--GLU-418; 370-LYS--GLU-381 AND TYR-809</scope>
    <source>
        <strain>ATCC 49558 / DSM 4304 / JCM 9628 / NBRC 100126 / VC-16</strain>
    </source>
</reference>
<reference key="3">
    <citation type="journal article" date="2003" name="Biochemistry">
        <title>Investigating the role of the latch in the positive supercoiling mechanism of reverse gyrase.</title>
        <authorList>
            <person name="Rodriguez A.C."/>
        </authorList>
    </citation>
    <scope>FUNCTION</scope>
    <scope>N-TERMINAL DOMAIN FUNCTIONAL CHARACTERIZATION</scope>
    <scope>DOMAIN</scope>
    <scope>MUTAGENESIS OF 370-LYS--GLU-381</scope>
</reference>
<reference key="4">
    <citation type="journal article" date="2004" name="Nucleic Acids Res.">
        <title>Reverse gyrase has heat-protective DNA chaperone activity independent of supercoiling.</title>
        <authorList>
            <person name="Kampmann M."/>
            <person name="Stock D."/>
        </authorList>
    </citation>
    <scope>FUNCTION IN DNA PROTECTION</scope>
    <scope>DNA-BINDING</scope>
</reference>
<reference key="5">
    <citation type="journal article" date="2006" name="J. Biol. Chem.">
        <title>Reverse gyrase functions as a DNA renaturase: annealing of complementary single-stranded circles and positive supercoiling of a bubble substrate.</title>
        <authorList>
            <person name="Hsieh T.S."/>
            <person name="Plank J.L."/>
        </authorList>
    </citation>
    <scope>FUNCTION</scope>
    <scope>CATALYTIC ACTIVITY</scope>
    <scope>BIOPHYSICOCHEMICAL PROPERTIES</scope>
</reference>
<reference evidence="17 18" key="6">
    <citation type="journal article" date="2002" name="EMBO J.">
        <title>Crystal structure of reverse gyrase: insights into the positive supercoiling of DNA.</title>
        <authorList>
            <person name="Rodriguez A.C."/>
            <person name="Stock D."/>
        </authorList>
    </citation>
    <scope>X-RAY CRYSTALLOGRAPHY (2.7 ANGSTROMS) OF 38-1054 AND IN COMPLEX WITH ADENYLYLIMIDODIPHOSPHATE (ADPNP)</scope>
    <scope>SUBUNIT</scope>
    <source>
        <strain>ATCC 49558 / DSM 4304 / JCM 9628 / NBRC 100126 / VC-16</strain>
    </source>
</reference>
<protein>
    <recommendedName>
        <fullName evidence="1 10">Reverse gyrase</fullName>
        <ecNumber evidence="1 9">5.6.2.-</ecNumber>
    </recommendedName>
</protein>
<accession>O29238</accession>
<sequence>MIPVVYSNLCPVCGGDLESKEIEKHVCFRKKRSLCLFPEDFLLKEFVEFFRKCVGEPRAIQKMWAKRILRKESFAATAPTGVGKTSFGLAMSLFLALKGKRCYVIFPTSLLVIQAAETIRKYAEKAGVGTENLIGYYHGRIPKREKENFMQNLRNFKIVITTTQFLSKHYRELGHFDFIFVDDVDAILKASKNVDKLLHLLGFHYDLKTKSWVGEARGCLMVSTATAKKGKKAELFRQLLNFDIGSSRITVRNVEDVAVNDESISTLSSILEKLGTGGIIYARTGEEAEEIYESLKNKFRIGIVTATKKGDYEKFVEGEIDHLIGTAHYYGTLVRGLDLPERIRFAVFVGCPSFRVTIEDIDSLSPQMVKLLAYLYRNVDEIERLLPAVERHIDEVREILKKVMGKERPQAKDVVVREGEVIFPDLRTYIQGSGRTSRLFAGGLTKGASFLLEDDSELLSAFIERAKLYDIEFKSIDEVDFEKLSRELDESRDRYRRRQEFDLIKPALFIVESPTKARQISRFFGKPSVKVLDGAVVYEIPMQKYVLMVTASIGHVVDLITNRGFHGVLVNGRFVPVYASIKRCRDCGYQFTEDRESCPKCGSENVDNSRSRIEALRKLAHDAEFVIVGTDPDTEGEKIAWDLKNLLSGCGAVKRAEFHEVTRRAILEALESLRDVDENLVKAQVVRRIEDRWIGFVLSQKLWERFNNRNLSAGRAQTPVLGWIIDRFQESRERRKIAIVRDFDLVLEHDEEEFDLTIKLVEEREELRTPLPPYTTETMLSDANRILKFSVKQTMQIAQELFENGLITYHRTDSTRVSDVGQRIAKEYLGDDFVGREWGESGAHECIRPTRPLTRDDVQRLIQEGVLVVEGLRWEHFALYDLIFRRFMASQCRPFKVVVKKYSIEFDGKTAEEERIVRAEGRAYELYRAVWVKNELPTGTFRVKAEVKSVPKVLPFTQSEIIQMMKERGIGRPSTYATIVDRLFMRNYVVEKYGRMIPTKLGIDVFRFLVRRYAKFVSEDRTRDLESRMDAIERGELDYLKALEDLYAEIKSID</sequence>
<evidence type="ECO:0000255" key="1">
    <source>
        <dbReference type="HAMAP-Rule" id="MF_01125"/>
    </source>
</evidence>
<evidence type="ECO:0000255" key="2">
    <source>
        <dbReference type="PROSITE-ProRule" id="PRU01380"/>
    </source>
</evidence>
<evidence type="ECO:0000255" key="3">
    <source>
        <dbReference type="PROSITE-ProRule" id="PRU01381"/>
    </source>
</evidence>
<evidence type="ECO:0000255" key="4">
    <source>
        <dbReference type="PROSITE-ProRule" id="PRU01383"/>
    </source>
</evidence>
<evidence type="ECO:0000269" key="5">
    <source>
    </source>
</evidence>
<evidence type="ECO:0000269" key="6">
    <source>
    </source>
</evidence>
<evidence type="ECO:0000269" key="7">
    <source>
    </source>
</evidence>
<evidence type="ECO:0000269" key="8">
    <source>
    </source>
</evidence>
<evidence type="ECO:0000269" key="9">
    <source>
    </source>
</evidence>
<evidence type="ECO:0000303" key="10">
    <source>
    </source>
</evidence>
<evidence type="ECO:0000305" key="11">
    <source>
    </source>
</evidence>
<evidence type="ECO:0000305" key="12">
    <source>
    </source>
</evidence>
<evidence type="ECO:0000305" key="13">
    <source>
    </source>
</evidence>
<evidence type="ECO:0000305" key="14">
    <source>
    </source>
</evidence>
<evidence type="ECO:0000312" key="15">
    <source>
        <dbReference type="PDB" id="1GKU"/>
    </source>
</evidence>
<evidence type="ECO:0000312" key="16">
    <source>
        <dbReference type="PDB" id="1GL9"/>
    </source>
</evidence>
<evidence type="ECO:0007744" key="17">
    <source>
        <dbReference type="PDB" id="1GKU"/>
    </source>
</evidence>
<evidence type="ECO:0007744" key="18">
    <source>
        <dbReference type="PDB" id="1GL9"/>
    </source>
</evidence>
<evidence type="ECO:0007829" key="19">
    <source>
        <dbReference type="PDB" id="1GKU"/>
    </source>
</evidence>
<evidence type="ECO:0007829" key="20">
    <source>
        <dbReference type="PDB" id="1GL9"/>
    </source>
</evidence>
<comment type="function">
    <text evidence="6 7 9 14">Modifies the topological state of DNA by introducing positive supercoils in an ATP-dependent process, increasing the linking number in steps of +1 (PubMed:12048189, PubMed:12755601, PubMed:16407212). Very efficient supercoiling occurs on relaxed DNA with a single-stranded bubble; the minimal bubble is 20 nucleotides (nt) and up to 10 positive supercoils can be introduced into a 3.1 kb plasmid with a 50 nt bubble (PubMed:16407212). Positively supercoils DNA with all (d)NTPS, although it requires about 10-fold more of non-(d)ATP (PubMed:12048189). In the absence of ATP (or at low levels of enzyme), or in the presence of ADP, relaxes negative supercoils (PubMed:12048189, PubMed:12755601, PubMed:16407212). Only relaxes positive supercoils when the substrate contains a bubble (PubMed:16407212). Also promotes strand annealing of complementary ssDNA circles (PubMed:16407212). Binds to single-stranded DNA, transiently cleaves and then rejoins the ends, introducing a positive supercoil in the process. The scissile phosphodiester is attacked by the catalytic tyrosine of the enzyme, resulting in the formation of a DNA-(5'-phosphotyrosyl)-enzyme intermediate. Probably involved in rewinding DNA strands in regions of the chromosome that have opened up to allow replication, transcription, DNA repair and/or for DNA protection (Probable) (PubMed:16407212).</text>
</comment>
<comment type="function">
    <text evidence="8">In vitro protects DNA against degradation at 90 degrees Celsius, reducing dsDNA breakage about 8-fold; ATP hydrolysis is not necessary, while ADP decreases the protection somewhat (PubMed:15247343). Coats all forms of dsDNA; the DNA is protected against cleavage and transcription (PubMed:15247343). Recognizes nicked DNA and forms a coat at the nicking site, which may help hold DNA in a structure amenable to repair (PubMed:15247343).</text>
</comment>
<comment type="catalytic activity">
    <reaction evidence="1">
        <text>ATP + H2O = ADP + phosphate + H(+)</text>
        <dbReference type="Rhea" id="RHEA:13065"/>
        <dbReference type="ChEBI" id="CHEBI:15377"/>
        <dbReference type="ChEBI" id="CHEBI:15378"/>
        <dbReference type="ChEBI" id="CHEBI:30616"/>
        <dbReference type="ChEBI" id="CHEBI:43474"/>
        <dbReference type="ChEBI" id="CHEBI:456216"/>
    </reaction>
</comment>
<comment type="cofactor">
    <cofactor evidence="1">
        <name>Zn(2+)</name>
        <dbReference type="ChEBI" id="CHEBI:29105"/>
    </cofactor>
    <text evidence="1">Binds 2 zinc ions per subunit.</text>
</comment>
<comment type="cofactor">
    <cofactor evidence="1">
        <name>Mg(2+)</name>
        <dbReference type="ChEBI" id="CHEBI:18420"/>
    </cofactor>
</comment>
<comment type="biophysicochemical properties">
    <temperatureDependence>
        <text evidence="6 9">Optimum temperature is 80 degrees Celsius for positive supercoiling (PubMed:12048189, PubMed:16407212). Optimum temperature is 80 degrees Celsius for relaxation of negative supercoils (PubMed:16407212).</text>
    </temperatureDependence>
</comment>
<comment type="subunit">
    <text evidence="1 5">Monomer (PubMed:11823434).</text>
</comment>
<comment type="subcellular location">
    <subcellularLocation>
        <location evidence="1">Cytoplasm</location>
    </subcellularLocation>
</comment>
<comment type="domain">
    <text evidence="1 6 7">Introduction of positive supercoils requires the cooperation of both domains. The helicase-like domain probably does not directly unwind DNA, but more likely acts by driving ATP-dependent conformational changes within the whole enzyme. A beta hairpin in the 'latch' region of the N-terminal domain plays a regulatory role in the enzyme, repressing topoisomerase activity in the absence of ATP and preventing the enzyme from acting as an ATP-independent relaxing enzyme; it also helps to coordinate nucleotide hydrolysis by the ATPase domain with the supercoiling activity of the topoisomerase domain (PubMed:12048189, PubMed:12755601).</text>
</comment>
<comment type="miscellaneous">
    <text evidence="1">This enzyme is the only unique feature of hyperthermophilic bacteria/archaea known and seems to be essential for adaptation to life at high temperatures. It may play a role in stabilization of DNA at high temperatures.</text>
</comment>
<comment type="similarity">
    <text evidence="1">In the N-terminal section; belongs to the DEAD box helicase family. DDVD subfamily.</text>
</comment>
<comment type="similarity">
    <text evidence="1">In the C-terminal section; belongs to the type IA topoisomerase family.</text>
</comment>